<proteinExistence type="inferred from homology"/>
<accession>B7LCE3</accession>
<dbReference type="EMBL" id="CU928145">
    <property type="protein sequence ID" value="CAU98552.1"/>
    <property type="molecule type" value="Genomic_DNA"/>
</dbReference>
<dbReference type="RefSeq" id="WP_000186369.1">
    <property type="nucleotide sequence ID" value="NC_011748.1"/>
</dbReference>
<dbReference type="SMR" id="B7LCE3"/>
<dbReference type="KEGG" id="eck:EC55989_2687"/>
<dbReference type="HOGENOM" id="CLU_020088_2_0_6"/>
<dbReference type="Proteomes" id="UP000000746">
    <property type="component" value="Chromosome"/>
</dbReference>
<dbReference type="GO" id="GO:0005886">
    <property type="term" value="C:plasma membrane"/>
    <property type="evidence" value="ECO:0007669"/>
    <property type="project" value="UniProtKB-SubCell"/>
</dbReference>
<dbReference type="GO" id="GO:0015086">
    <property type="term" value="F:cadmium ion transmembrane transporter activity"/>
    <property type="evidence" value="ECO:0007669"/>
    <property type="project" value="TreeGrafter"/>
</dbReference>
<dbReference type="GO" id="GO:0005384">
    <property type="term" value="F:manganese ion transmembrane transporter activity"/>
    <property type="evidence" value="ECO:0007669"/>
    <property type="project" value="TreeGrafter"/>
</dbReference>
<dbReference type="GO" id="GO:0046872">
    <property type="term" value="F:metal ion binding"/>
    <property type="evidence" value="ECO:0007669"/>
    <property type="project" value="UniProtKB-UniRule"/>
</dbReference>
<dbReference type="GO" id="GO:0015293">
    <property type="term" value="F:symporter activity"/>
    <property type="evidence" value="ECO:0007669"/>
    <property type="project" value="UniProtKB-UniRule"/>
</dbReference>
<dbReference type="GO" id="GO:0034755">
    <property type="term" value="P:iron ion transmembrane transport"/>
    <property type="evidence" value="ECO:0007669"/>
    <property type="project" value="TreeGrafter"/>
</dbReference>
<dbReference type="HAMAP" id="MF_00221">
    <property type="entry name" value="NRAMP"/>
    <property type="match status" value="1"/>
</dbReference>
<dbReference type="InterPro" id="IPR001046">
    <property type="entry name" value="NRAMP_fam"/>
</dbReference>
<dbReference type="NCBIfam" id="TIGR01197">
    <property type="entry name" value="nramp"/>
    <property type="match status" value="1"/>
</dbReference>
<dbReference type="NCBIfam" id="NF037982">
    <property type="entry name" value="Nramp_1"/>
    <property type="match status" value="1"/>
</dbReference>
<dbReference type="NCBIfam" id="NF001923">
    <property type="entry name" value="PRK00701.1"/>
    <property type="match status" value="1"/>
</dbReference>
<dbReference type="PANTHER" id="PTHR11706:SF33">
    <property type="entry name" value="NATURAL RESISTANCE-ASSOCIATED MACROPHAGE PROTEIN 2"/>
    <property type="match status" value="1"/>
</dbReference>
<dbReference type="PANTHER" id="PTHR11706">
    <property type="entry name" value="SOLUTE CARRIER PROTEIN FAMILY 11 MEMBER"/>
    <property type="match status" value="1"/>
</dbReference>
<dbReference type="Pfam" id="PF01566">
    <property type="entry name" value="Nramp"/>
    <property type="match status" value="1"/>
</dbReference>
<dbReference type="PRINTS" id="PR00447">
    <property type="entry name" value="NATRESASSCMP"/>
</dbReference>
<protein>
    <recommendedName>
        <fullName evidence="1">Divalent metal cation transporter MntH</fullName>
    </recommendedName>
</protein>
<reference key="1">
    <citation type="journal article" date="2009" name="PLoS Genet.">
        <title>Organised genome dynamics in the Escherichia coli species results in highly diverse adaptive paths.</title>
        <authorList>
            <person name="Touchon M."/>
            <person name="Hoede C."/>
            <person name="Tenaillon O."/>
            <person name="Barbe V."/>
            <person name="Baeriswyl S."/>
            <person name="Bidet P."/>
            <person name="Bingen E."/>
            <person name="Bonacorsi S."/>
            <person name="Bouchier C."/>
            <person name="Bouvet O."/>
            <person name="Calteau A."/>
            <person name="Chiapello H."/>
            <person name="Clermont O."/>
            <person name="Cruveiller S."/>
            <person name="Danchin A."/>
            <person name="Diard M."/>
            <person name="Dossat C."/>
            <person name="Karoui M.E."/>
            <person name="Frapy E."/>
            <person name="Garry L."/>
            <person name="Ghigo J.M."/>
            <person name="Gilles A.M."/>
            <person name="Johnson J."/>
            <person name="Le Bouguenec C."/>
            <person name="Lescat M."/>
            <person name="Mangenot S."/>
            <person name="Martinez-Jehanne V."/>
            <person name="Matic I."/>
            <person name="Nassif X."/>
            <person name="Oztas S."/>
            <person name="Petit M.A."/>
            <person name="Pichon C."/>
            <person name="Rouy Z."/>
            <person name="Ruf C.S."/>
            <person name="Schneider D."/>
            <person name="Tourret J."/>
            <person name="Vacherie B."/>
            <person name="Vallenet D."/>
            <person name="Medigue C."/>
            <person name="Rocha E.P.C."/>
            <person name="Denamur E."/>
        </authorList>
    </citation>
    <scope>NUCLEOTIDE SEQUENCE [LARGE SCALE GENOMIC DNA]</scope>
    <source>
        <strain>55989 / EAEC</strain>
    </source>
</reference>
<keyword id="KW-0997">Cell inner membrane</keyword>
<keyword id="KW-1003">Cell membrane</keyword>
<keyword id="KW-0406">Ion transport</keyword>
<keyword id="KW-0472">Membrane</keyword>
<keyword id="KW-1185">Reference proteome</keyword>
<keyword id="KW-0769">Symport</keyword>
<keyword id="KW-0812">Transmembrane</keyword>
<keyword id="KW-1133">Transmembrane helix</keyword>
<keyword id="KW-0813">Transport</keyword>
<gene>
    <name evidence="1" type="primary">mntH</name>
    <name type="ordered locus">EC55989_2687</name>
</gene>
<sequence>MTNYRVESSSGRAARKMRLALMGPAFIAAIGYIDPGNFATNIQAGASFGYQLLWVVVWANLMAMLIQILSAKLGIATGKNLAEQIRDHYPRPVVWFYWVQAEIIAMATDLAEFIGAAIGFKLILGVSLLQGAVLTGIATFLILMLQRRGQKPLEKVIGGLLLFVAAAYIVELIFSQPNLAQLGKGMVIPSLPTSEAVFLAAGVLGATIMPHVIYLHSSLTQHLHGGSRQQRYSATKWDVAIAMTIAGFVNLAMMATAAAAFHFSGHTGVADLDEAYLTLQPLLSHAAATVFGLSLVAAGLSSTVVGTLAGQVVMQGFIRFHIPLWVRRTVTMLPSFIVILMGLDPTRILVMSQVLLSFGIALALVPLLIFTSDSKLMGDLVNSKRVKQTGWVIVVLVVALNIWLLVGTALGL</sequence>
<evidence type="ECO:0000255" key="1">
    <source>
        <dbReference type="HAMAP-Rule" id="MF_00221"/>
    </source>
</evidence>
<name>MNTH_ECO55</name>
<feature type="chain" id="PRO_1000124864" description="Divalent metal cation transporter MntH">
    <location>
        <begin position="1"/>
        <end position="412"/>
    </location>
</feature>
<feature type="topological domain" description="Cytoplasmic" evidence="1">
    <location>
        <begin position="1"/>
        <end position="19"/>
    </location>
</feature>
<feature type="transmembrane region" description="Helical" evidence="1">
    <location>
        <begin position="20"/>
        <end position="39"/>
    </location>
</feature>
<feature type="topological domain" description="Periplasmic" evidence="1">
    <location>
        <begin position="40"/>
        <end position="51"/>
    </location>
</feature>
<feature type="transmembrane region" description="Helical" evidence="1">
    <location>
        <begin position="52"/>
        <end position="71"/>
    </location>
</feature>
<feature type="topological domain" description="Cytoplasmic" evidence="1">
    <location>
        <begin position="72"/>
        <end position="95"/>
    </location>
</feature>
<feature type="transmembrane region" description="Helical" evidence="1">
    <location>
        <begin position="96"/>
        <end position="118"/>
    </location>
</feature>
<feature type="topological domain" description="Periplasmic" evidence="1">
    <location>
        <begin position="119"/>
        <end position="125"/>
    </location>
</feature>
<feature type="transmembrane region" description="Helical" evidence="1">
    <location>
        <begin position="126"/>
        <end position="145"/>
    </location>
</feature>
<feature type="topological domain" description="Cytoplasmic" evidence="1">
    <location>
        <begin position="146"/>
        <end position="155"/>
    </location>
</feature>
<feature type="transmembrane region" description="Helical" evidence="1">
    <location>
        <begin position="156"/>
        <end position="175"/>
    </location>
</feature>
<feature type="topological domain" description="Periplasmic" evidence="1">
    <location>
        <begin position="176"/>
        <end position="196"/>
    </location>
</feature>
<feature type="transmembrane region" description="Helical" evidence="1">
    <location>
        <begin position="197"/>
        <end position="220"/>
    </location>
</feature>
<feature type="topological domain" description="Cytoplasmic" evidence="1">
    <location>
        <begin position="221"/>
        <end position="238"/>
    </location>
</feature>
<feature type="transmembrane region" description="Helical" evidence="1">
    <location>
        <begin position="239"/>
        <end position="258"/>
    </location>
</feature>
<feature type="topological domain" description="Periplasmic" evidence="1">
    <location>
        <begin position="259"/>
        <end position="276"/>
    </location>
</feature>
<feature type="transmembrane region" description="Helical" evidence="1">
    <location>
        <begin position="277"/>
        <end position="297"/>
    </location>
</feature>
<feature type="topological domain" description="Cytoplasmic" evidence="1">
    <location>
        <begin position="298"/>
        <end position="327"/>
    </location>
</feature>
<feature type="transmembrane region" description="Helical" evidence="1">
    <location>
        <begin position="328"/>
        <end position="344"/>
    </location>
</feature>
<feature type="topological domain" description="Periplasmic" evidence="1">
    <location>
        <begin position="345"/>
        <end position="350"/>
    </location>
</feature>
<feature type="transmembrane region" description="Helical" evidence="1">
    <location>
        <begin position="351"/>
        <end position="370"/>
    </location>
</feature>
<feature type="topological domain" description="Cytoplasmic" evidence="1">
    <location>
        <begin position="371"/>
        <end position="387"/>
    </location>
</feature>
<feature type="transmembrane region" description="Helical" evidence="1">
    <location>
        <begin position="388"/>
        <end position="406"/>
    </location>
</feature>
<feature type="topological domain" description="Periplasmic" evidence="1">
    <location>
        <begin position="407"/>
        <end position="412"/>
    </location>
</feature>
<organism>
    <name type="scientific">Escherichia coli (strain 55989 / EAEC)</name>
    <dbReference type="NCBI Taxonomy" id="585055"/>
    <lineage>
        <taxon>Bacteria</taxon>
        <taxon>Pseudomonadati</taxon>
        <taxon>Pseudomonadota</taxon>
        <taxon>Gammaproteobacteria</taxon>
        <taxon>Enterobacterales</taxon>
        <taxon>Enterobacteriaceae</taxon>
        <taxon>Escherichia</taxon>
    </lineage>
</organism>
<comment type="function">
    <text evidence="1">H(+)-stimulated, divalent metal cation uptake system.</text>
</comment>
<comment type="subcellular location">
    <subcellularLocation>
        <location evidence="1">Cell inner membrane</location>
        <topology evidence="1">Multi-pass membrane protein</topology>
    </subcellularLocation>
</comment>
<comment type="similarity">
    <text evidence="1">Belongs to the NRAMP family.</text>
</comment>